<accession>P31683</accession>
<dbReference type="EC" id="4.2.1.11"/>
<dbReference type="EMBL" id="X66412">
    <property type="protein sequence ID" value="CAA47043.1"/>
    <property type="molecule type" value="mRNA"/>
</dbReference>
<dbReference type="PIR" id="S24996">
    <property type="entry name" value="S24996"/>
</dbReference>
<dbReference type="SMR" id="P31683"/>
<dbReference type="PaxDb" id="3055-EDO96709"/>
<dbReference type="ProMEX" id="P31683"/>
<dbReference type="eggNOG" id="KOG2670">
    <property type="taxonomic scope" value="Eukaryota"/>
</dbReference>
<dbReference type="UniPathway" id="UPA00109">
    <property type="reaction ID" value="UER00187"/>
</dbReference>
<dbReference type="GO" id="GO:0000015">
    <property type="term" value="C:phosphopyruvate hydratase complex"/>
    <property type="evidence" value="ECO:0007669"/>
    <property type="project" value="InterPro"/>
</dbReference>
<dbReference type="GO" id="GO:0000287">
    <property type="term" value="F:magnesium ion binding"/>
    <property type="evidence" value="ECO:0007669"/>
    <property type="project" value="InterPro"/>
</dbReference>
<dbReference type="GO" id="GO:0004634">
    <property type="term" value="F:phosphopyruvate hydratase activity"/>
    <property type="evidence" value="ECO:0007669"/>
    <property type="project" value="UniProtKB-EC"/>
</dbReference>
<dbReference type="GO" id="GO:0006096">
    <property type="term" value="P:glycolytic process"/>
    <property type="evidence" value="ECO:0007669"/>
    <property type="project" value="UniProtKB-UniPathway"/>
</dbReference>
<dbReference type="CDD" id="cd03313">
    <property type="entry name" value="enolase"/>
    <property type="match status" value="1"/>
</dbReference>
<dbReference type="FunFam" id="3.20.20.120:FF:000002">
    <property type="entry name" value="Enolase 1"/>
    <property type="match status" value="1"/>
</dbReference>
<dbReference type="Gene3D" id="3.20.20.120">
    <property type="entry name" value="Enolase-like C-terminal domain"/>
    <property type="match status" value="1"/>
</dbReference>
<dbReference type="Gene3D" id="3.30.390.10">
    <property type="entry name" value="Enolase-like, N-terminal domain"/>
    <property type="match status" value="1"/>
</dbReference>
<dbReference type="HAMAP" id="MF_00318">
    <property type="entry name" value="Enolase"/>
    <property type="match status" value="1"/>
</dbReference>
<dbReference type="InterPro" id="IPR000941">
    <property type="entry name" value="Enolase"/>
</dbReference>
<dbReference type="InterPro" id="IPR036849">
    <property type="entry name" value="Enolase-like_C_sf"/>
</dbReference>
<dbReference type="InterPro" id="IPR029017">
    <property type="entry name" value="Enolase-like_N"/>
</dbReference>
<dbReference type="InterPro" id="IPR020810">
    <property type="entry name" value="Enolase_C"/>
</dbReference>
<dbReference type="InterPro" id="IPR020809">
    <property type="entry name" value="Enolase_CS"/>
</dbReference>
<dbReference type="InterPro" id="IPR020811">
    <property type="entry name" value="Enolase_N"/>
</dbReference>
<dbReference type="NCBIfam" id="TIGR01060">
    <property type="entry name" value="eno"/>
    <property type="match status" value="1"/>
</dbReference>
<dbReference type="PANTHER" id="PTHR11902:SF56">
    <property type="entry name" value="CYTOSOLIC ENOLASE 3"/>
    <property type="match status" value="1"/>
</dbReference>
<dbReference type="PANTHER" id="PTHR11902">
    <property type="entry name" value="ENOLASE"/>
    <property type="match status" value="1"/>
</dbReference>
<dbReference type="Pfam" id="PF00113">
    <property type="entry name" value="Enolase_C"/>
    <property type="match status" value="1"/>
</dbReference>
<dbReference type="Pfam" id="PF03952">
    <property type="entry name" value="Enolase_N"/>
    <property type="match status" value="1"/>
</dbReference>
<dbReference type="PRINTS" id="PR00148">
    <property type="entry name" value="ENOLASE"/>
</dbReference>
<dbReference type="SFLD" id="SFLDS00001">
    <property type="entry name" value="Enolase"/>
    <property type="match status" value="1"/>
</dbReference>
<dbReference type="SFLD" id="SFLDG00178">
    <property type="entry name" value="enolase"/>
    <property type="match status" value="1"/>
</dbReference>
<dbReference type="SMART" id="SM01192">
    <property type="entry name" value="Enolase_C"/>
    <property type="match status" value="1"/>
</dbReference>
<dbReference type="SMART" id="SM01193">
    <property type="entry name" value="Enolase_N"/>
    <property type="match status" value="1"/>
</dbReference>
<dbReference type="SUPFAM" id="SSF51604">
    <property type="entry name" value="Enolase C-terminal domain-like"/>
    <property type="match status" value="1"/>
</dbReference>
<dbReference type="SUPFAM" id="SSF54826">
    <property type="entry name" value="Enolase N-terminal domain-like"/>
    <property type="match status" value="1"/>
</dbReference>
<dbReference type="PROSITE" id="PS00164">
    <property type="entry name" value="ENOLASE"/>
    <property type="match status" value="1"/>
</dbReference>
<feature type="chain" id="PRO_0000134068" description="Enolase">
    <location>
        <begin position="1" status="less than"/>
        <end position="372"/>
    </location>
</feature>
<feature type="active site" description="Proton donor" evidence="1">
    <location>
        <position position="147"/>
    </location>
</feature>
<feature type="active site" description="Proton acceptor" evidence="1">
    <location>
        <position position="282"/>
    </location>
</feature>
<feature type="binding site" evidence="1">
    <location>
        <position position="95"/>
    </location>
    <ligand>
        <name>substrate</name>
    </ligand>
</feature>
<feature type="binding site" evidence="1">
    <location>
        <position position="104"/>
    </location>
    <ligand>
        <name>substrate</name>
    </ligand>
</feature>
<feature type="binding site" evidence="1">
    <location>
        <position position="182"/>
    </location>
    <ligand>
        <name>Mg(2+)</name>
        <dbReference type="ChEBI" id="CHEBI:18420"/>
    </ligand>
</feature>
<feature type="binding site" evidence="1">
    <location>
        <position position="232"/>
    </location>
    <ligand>
        <name>Mg(2+)</name>
        <dbReference type="ChEBI" id="CHEBI:18420"/>
    </ligand>
</feature>
<feature type="binding site" evidence="1">
    <location>
        <position position="232"/>
    </location>
    <ligand>
        <name>substrate</name>
    </ligand>
</feature>
<feature type="binding site" evidence="1">
    <location>
        <position position="257"/>
    </location>
    <ligand>
        <name>Mg(2+)</name>
        <dbReference type="ChEBI" id="CHEBI:18420"/>
    </ligand>
</feature>
<feature type="binding site" evidence="1">
    <location>
        <position position="257"/>
    </location>
    <ligand>
        <name>substrate</name>
    </ligand>
</feature>
<feature type="binding site" evidence="1">
    <location>
        <begin position="309"/>
        <end position="312"/>
    </location>
    <ligand>
        <name>substrate</name>
    </ligand>
</feature>
<feature type="binding site" evidence="1">
    <location>
        <position position="333"/>
    </location>
    <ligand>
        <name>substrate</name>
    </ligand>
</feature>
<feature type="non-terminal residue">
    <location>
        <position position="1"/>
    </location>
</feature>
<reference key="1">
    <citation type="journal article" date="1993" name="Plant Sci.">
        <title>Isolation and characterization of cDNA sequences controlled by inorganic phosphate in Chlamydomonas reinhardtii.</title>
        <authorList>
            <person name="Dumont F."/>
            <person name="Joris B."/>
            <person name="Gumusboga A."/>
            <person name="Bruyninx M."/>
            <person name="Loppes R."/>
        </authorList>
    </citation>
    <scope>NUCLEOTIDE SEQUENCE [MRNA]</scope>
    <source>
        <strain>137c / CC-125</strain>
    </source>
</reference>
<organism>
    <name type="scientific">Chlamydomonas reinhardtii</name>
    <name type="common">Chlamydomonas smithii</name>
    <dbReference type="NCBI Taxonomy" id="3055"/>
    <lineage>
        <taxon>Eukaryota</taxon>
        <taxon>Viridiplantae</taxon>
        <taxon>Chlorophyta</taxon>
        <taxon>core chlorophytes</taxon>
        <taxon>Chlorophyceae</taxon>
        <taxon>CS clade</taxon>
        <taxon>Chlamydomonadales</taxon>
        <taxon>Chlamydomonadaceae</taxon>
        <taxon>Chlamydomonas</taxon>
    </lineage>
</organism>
<comment type="catalytic activity">
    <reaction>
        <text>(2R)-2-phosphoglycerate = phosphoenolpyruvate + H2O</text>
        <dbReference type="Rhea" id="RHEA:10164"/>
        <dbReference type="ChEBI" id="CHEBI:15377"/>
        <dbReference type="ChEBI" id="CHEBI:58289"/>
        <dbReference type="ChEBI" id="CHEBI:58702"/>
        <dbReference type="EC" id="4.2.1.11"/>
    </reaction>
</comment>
<comment type="cofactor">
    <cofactor>
        <name>Mg(2+)</name>
        <dbReference type="ChEBI" id="CHEBI:18420"/>
    </cofactor>
    <text>Mg(2+) is required for catalysis and for stabilizing the dimer.</text>
</comment>
<comment type="pathway">
    <text>Carbohydrate degradation; glycolysis; pyruvate from D-glyceraldehyde 3-phosphate: step 4/5.</text>
</comment>
<comment type="subunit">
    <text evidence="1">Homodimer.</text>
</comment>
<comment type="subcellular location">
    <subcellularLocation>
        <location>Cytoplasm</location>
    </subcellularLocation>
</comment>
<comment type="similarity">
    <text evidence="2">Belongs to the enolase family.</text>
</comment>
<evidence type="ECO:0000250" key="1"/>
<evidence type="ECO:0000305" key="2"/>
<proteinExistence type="evidence at transcript level"/>
<keyword id="KW-0963">Cytoplasm</keyword>
<keyword id="KW-0324">Glycolysis</keyword>
<keyword id="KW-0456">Lyase</keyword>
<keyword id="KW-0460">Magnesium</keyword>
<keyword id="KW-0479">Metal-binding</keyword>
<gene>
    <name type="primary">ENO</name>
</gene>
<name>ENO_CHLRE</name>
<protein>
    <recommendedName>
        <fullName>Enolase</fullName>
        <ecNumber>4.2.1.11</ecNumber>
    </recommendedName>
    <alternativeName>
        <fullName>2-phospho-D-glycerate hydro-lyase</fullName>
    </alternativeName>
    <alternativeName>
        <fullName>2-phosphoglycerate dehydratase</fullName>
    </alternativeName>
</protein>
<sequence length="372" mass="40110">VTKAVENINAIIAPALKGMDPVKQAEIDQKMKDLDGTDNKGKLGANAILAVSMAVCKAGAAEKGVPLYKHIADLAGNSKLILPVPSFNIINGGSHAGNALAMQEFMILPVGASSFSEAMRMGCEVYHALKGLIKAKYGQDACNVGDEGGFAPNIGSNDEGLNLVNEAIEKAGYTGKVKIGMDVASSEFYTEDGMYDLDFKNQPNDGSQKKTKEQMLELYNEFCKKYPVISIEDPFEQDDWEPCAKLTTENICQVVGDDILVTNPVRVKKAIDAKAVNALLLKVNQIGTITESIEAVRMAKEAGWGVMTSHRSGETEDSFIADLAVGLASGQIKTGAPCRSERNAKYNQLLRIEEELGENAVYAGESWRHIGW</sequence>